<sequence>MEFQSDLTREISPQRKLGRGKIEIKRIENTTNRQVTFCKRRNGLLKKAYELSVLCDAEVALIVFSSRGRLYEYANNSVKATIERYKKACSDSSNTGSIAEANAQYYQQEASKLRAQIGNLQNQNRNFLGESLAALNLRDLRNLEQKIEKGISKIRAKKNELLFAEIEYMQKREIDLHNNNQYLRAKIAETERSQQMNLMPGSSSYDLVPPQQSFDARNYLQVNGLQTNNHYPRQDQPPLQLV</sequence>
<comment type="function">
    <text evidence="1">Probable transcription factor involved in regulating genes that determines stamen and carpel development in wild-type flowers.</text>
</comment>
<comment type="interaction">
    <interactant intactId="EBI-532642">
        <id>Q40885</id>
    </interactant>
    <interactant intactId="EBI-531655">
        <id>Q03489</id>
        <label>FBP2</label>
    </interactant>
    <organismsDiffer>false</organismsDiffer>
    <experiments>3</experiments>
</comment>
<comment type="subcellular location">
    <subcellularLocation>
        <location evidence="2">Nucleus</location>
    </subcellularLocation>
</comment>
<comment type="tissue specificity">
    <text>Expressed exclusively in stamens and carpels.</text>
</comment>
<evidence type="ECO:0000250" key="1"/>
<evidence type="ECO:0000255" key="2">
    <source>
        <dbReference type="PROSITE-ProRule" id="PRU00251"/>
    </source>
</evidence>
<evidence type="ECO:0000255" key="3">
    <source>
        <dbReference type="PROSITE-ProRule" id="PRU00629"/>
    </source>
</evidence>
<name>AG_PETHY</name>
<dbReference type="EMBL" id="X72912">
    <property type="protein sequence ID" value="CAA51417.1"/>
    <property type="molecule type" value="mRNA"/>
</dbReference>
<dbReference type="EMBL" id="AB076051">
    <property type="protein sequence ID" value="BAB79434.1"/>
    <property type="molecule type" value="Genomic_DNA"/>
</dbReference>
<dbReference type="PIR" id="JQ2212">
    <property type="entry name" value="JQ2212"/>
</dbReference>
<dbReference type="SMR" id="Q40885"/>
<dbReference type="IntAct" id="Q40885">
    <property type="interactions" value="5"/>
</dbReference>
<dbReference type="GO" id="GO:0005634">
    <property type="term" value="C:nucleus"/>
    <property type="evidence" value="ECO:0007669"/>
    <property type="project" value="UniProtKB-SubCell"/>
</dbReference>
<dbReference type="GO" id="GO:0003700">
    <property type="term" value="F:DNA-binding transcription factor activity"/>
    <property type="evidence" value="ECO:0007669"/>
    <property type="project" value="InterPro"/>
</dbReference>
<dbReference type="GO" id="GO:0046983">
    <property type="term" value="F:protein dimerization activity"/>
    <property type="evidence" value="ECO:0007669"/>
    <property type="project" value="InterPro"/>
</dbReference>
<dbReference type="GO" id="GO:0000977">
    <property type="term" value="F:RNA polymerase II transcription regulatory region sequence-specific DNA binding"/>
    <property type="evidence" value="ECO:0007669"/>
    <property type="project" value="InterPro"/>
</dbReference>
<dbReference type="GO" id="GO:0045944">
    <property type="term" value="P:positive regulation of transcription by RNA polymerase II"/>
    <property type="evidence" value="ECO:0007669"/>
    <property type="project" value="InterPro"/>
</dbReference>
<dbReference type="CDD" id="cd00265">
    <property type="entry name" value="MADS_MEF2_like"/>
    <property type="match status" value="1"/>
</dbReference>
<dbReference type="FunFam" id="3.40.1810.10:FF:000009">
    <property type="entry name" value="agamous-like MADS-box protein AGL11"/>
    <property type="match status" value="1"/>
</dbReference>
<dbReference type="Gene3D" id="3.40.1810.10">
    <property type="entry name" value="Transcription factor, MADS-box"/>
    <property type="match status" value="1"/>
</dbReference>
<dbReference type="InterPro" id="IPR050142">
    <property type="entry name" value="MADS-box/MEF2_TF"/>
</dbReference>
<dbReference type="InterPro" id="IPR033896">
    <property type="entry name" value="MEF2-like_N"/>
</dbReference>
<dbReference type="InterPro" id="IPR002487">
    <property type="entry name" value="TF_Kbox"/>
</dbReference>
<dbReference type="InterPro" id="IPR002100">
    <property type="entry name" value="TF_MADSbox"/>
</dbReference>
<dbReference type="InterPro" id="IPR036879">
    <property type="entry name" value="TF_MADSbox_sf"/>
</dbReference>
<dbReference type="PANTHER" id="PTHR48019">
    <property type="entry name" value="SERUM RESPONSE FACTOR HOMOLOG"/>
    <property type="match status" value="1"/>
</dbReference>
<dbReference type="Pfam" id="PF01486">
    <property type="entry name" value="K-box"/>
    <property type="match status" value="1"/>
</dbReference>
<dbReference type="Pfam" id="PF00319">
    <property type="entry name" value="SRF-TF"/>
    <property type="match status" value="1"/>
</dbReference>
<dbReference type="PRINTS" id="PR00404">
    <property type="entry name" value="MADSDOMAIN"/>
</dbReference>
<dbReference type="SMART" id="SM00432">
    <property type="entry name" value="MADS"/>
    <property type="match status" value="1"/>
</dbReference>
<dbReference type="SUPFAM" id="SSF55455">
    <property type="entry name" value="SRF-like"/>
    <property type="match status" value="1"/>
</dbReference>
<dbReference type="PROSITE" id="PS51297">
    <property type="entry name" value="K_BOX"/>
    <property type="match status" value="1"/>
</dbReference>
<dbReference type="PROSITE" id="PS00350">
    <property type="entry name" value="MADS_BOX_1"/>
    <property type="match status" value="1"/>
</dbReference>
<dbReference type="PROSITE" id="PS50066">
    <property type="entry name" value="MADS_BOX_2"/>
    <property type="match status" value="1"/>
</dbReference>
<feature type="chain" id="PRO_0000199449" description="Floral homeotic protein AGAMOUS">
    <location>
        <begin position="1"/>
        <end position="242"/>
    </location>
</feature>
<feature type="domain" description="MADS-box" evidence="2">
    <location>
        <begin position="19"/>
        <end position="73"/>
    </location>
</feature>
<feature type="domain" description="K-box" evidence="3">
    <location>
        <begin position="103"/>
        <end position="193"/>
    </location>
</feature>
<organism>
    <name type="scientific">Petunia hybrida</name>
    <name type="common">Petunia</name>
    <dbReference type="NCBI Taxonomy" id="4102"/>
    <lineage>
        <taxon>Eukaryota</taxon>
        <taxon>Viridiplantae</taxon>
        <taxon>Streptophyta</taxon>
        <taxon>Embryophyta</taxon>
        <taxon>Tracheophyta</taxon>
        <taxon>Spermatophyta</taxon>
        <taxon>Magnoliopsida</taxon>
        <taxon>eudicotyledons</taxon>
        <taxon>Gunneridae</taxon>
        <taxon>Pentapetalae</taxon>
        <taxon>asterids</taxon>
        <taxon>lamiids</taxon>
        <taxon>Solanales</taxon>
        <taxon>Solanaceae</taxon>
        <taxon>Petunioideae</taxon>
        <taxon>Petunia</taxon>
    </lineage>
</organism>
<reference key="1">
    <citation type="journal article" date="1993" name="Plant Cell">
        <title>Ectopic expression of pMADS3 in transgenic petunia phenocopies the petunia blind mutant.</title>
        <authorList>
            <person name="Tsuchimoto S."/>
            <person name="van der Krol A.R."/>
            <person name="Chua N.H."/>
        </authorList>
    </citation>
    <scope>NUCLEOTIDE SEQUENCE [MRNA]</scope>
    <source>
        <tissue>Flower</tissue>
    </source>
</reference>
<reference key="2">
    <citation type="journal article" date="2002" name="Plant J.">
        <title>Role of petunia pMADS3 in determination of floral organ and meristem identity, as revealed by its loss of function.</title>
        <authorList>
            <person name="Kapoor M."/>
            <person name="Tsuda S."/>
            <person name="Tanaka Y."/>
            <person name="Mayama T."/>
            <person name="Okuyama Y."/>
            <person name="Tsuchimoto S."/>
            <person name="Takatsuji H."/>
        </authorList>
    </citation>
    <scope>NUCLEOTIDE SEQUENCE [GENOMIC DNA]</scope>
    <source>
        <strain>cv. Mitchell</strain>
    </source>
</reference>
<proteinExistence type="evidence at protein level"/>
<keyword id="KW-0010">Activator</keyword>
<keyword id="KW-0238">DNA-binding</keyword>
<keyword id="KW-0539">Nucleus</keyword>
<keyword id="KW-0804">Transcription</keyword>
<keyword id="KW-0805">Transcription regulation</keyword>
<protein>
    <recommendedName>
        <fullName>Floral homeotic protein AGAMOUS</fullName>
    </recommendedName>
    <alternativeName>
        <fullName>pMADS3</fullName>
    </alternativeName>
</protein>
<accession>Q40885</accession>
<gene>
    <name type="primary">AG1</name>
    <name type="synonym">MADS3</name>
</gene>